<gene>
    <name evidence="1" type="primary">rplR</name>
    <name type="ordered locus">RT0635</name>
</gene>
<accession>Q68W94</accession>
<keyword id="KW-0687">Ribonucleoprotein</keyword>
<keyword id="KW-0689">Ribosomal protein</keyword>
<keyword id="KW-0694">RNA-binding</keyword>
<keyword id="KW-0699">rRNA-binding</keyword>
<sequence>MRSAKLKFEKRKSRIRHKISRTSNRVRLSVFKSGRHIYAQIIDDSKSITIASASTLDKTIKKIKKSHCNVENAIKIGREIAKKANSAGIKEVVFDRGGYKYHGIIKALADAAREKITF</sequence>
<dbReference type="EMBL" id="AE017197">
    <property type="protein sequence ID" value="AAU04098.1"/>
    <property type="molecule type" value="Genomic_DNA"/>
</dbReference>
<dbReference type="RefSeq" id="WP_011191077.1">
    <property type="nucleotide sequence ID" value="NC_006142.1"/>
</dbReference>
<dbReference type="SMR" id="Q68W94"/>
<dbReference type="KEGG" id="rty:RT0635"/>
<dbReference type="eggNOG" id="COG0256">
    <property type="taxonomic scope" value="Bacteria"/>
</dbReference>
<dbReference type="HOGENOM" id="CLU_098841_0_1_5"/>
<dbReference type="OrthoDB" id="9810939at2"/>
<dbReference type="Proteomes" id="UP000000604">
    <property type="component" value="Chromosome"/>
</dbReference>
<dbReference type="GO" id="GO:0022625">
    <property type="term" value="C:cytosolic large ribosomal subunit"/>
    <property type="evidence" value="ECO:0007669"/>
    <property type="project" value="TreeGrafter"/>
</dbReference>
<dbReference type="GO" id="GO:0008097">
    <property type="term" value="F:5S rRNA binding"/>
    <property type="evidence" value="ECO:0007669"/>
    <property type="project" value="TreeGrafter"/>
</dbReference>
<dbReference type="GO" id="GO:0003735">
    <property type="term" value="F:structural constituent of ribosome"/>
    <property type="evidence" value="ECO:0007669"/>
    <property type="project" value="InterPro"/>
</dbReference>
<dbReference type="GO" id="GO:0006412">
    <property type="term" value="P:translation"/>
    <property type="evidence" value="ECO:0007669"/>
    <property type="project" value="UniProtKB-UniRule"/>
</dbReference>
<dbReference type="CDD" id="cd00432">
    <property type="entry name" value="Ribosomal_L18_L5e"/>
    <property type="match status" value="1"/>
</dbReference>
<dbReference type="FunFam" id="3.30.420.100:FF:000001">
    <property type="entry name" value="50S ribosomal protein L18"/>
    <property type="match status" value="1"/>
</dbReference>
<dbReference type="Gene3D" id="3.30.420.100">
    <property type="match status" value="1"/>
</dbReference>
<dbReference type="HAMAP" id="MF_01337_B">
    <property type="entry name" value="Ribosomal_uL18_B"/>
    <property type="match status" value="1"/>
</dbReference>
<dbReference type="InterPro" id="IPR004389">
    <property type="entry name" value="Ribosomal_uL18_bac-type"/>
</dbReference>
<dbReference type="InterPro" id="IPR005484">
    <property type="entry name" value="Ribosomal_uL18_bac/euk"/>
</dbReference>
<dbReference type="NCBIfam" id="TIGR00060">
    <property type="entry name" value="L18_bact"/>
    <property type="match status" value="1"/>
</dbReference>
<dbReference type="PANTHER" id="PTHR12899">
    <property type="entry name" value="39S RIBOSOMAL PROTEIN L18, MITOCHONDRIAL"/>
    <property type="match status" value="1"/>
</dbReference>
<dbReference type="PANTHER" id="PTHR12899:SF3">
    <property type="entry name" value="LARGE RIBOSOMAL SUBUNIT PROTEIN UL18M"/>
    <property type="match status" value="1"/>
</dbReference>
<dbReference type="Pfam" id="PF00861">
    <property type="entry name" value="Ribosomal_L18p"/>
    <property type="match status" value="1"/>
</dbReference>
<dbReference type="SUPFAM" id="SSF53137">
    <property type="entry name" value="Translational machinery components"/>
    <property type="match status" value="1"/>
</dbReference>
<feature type="chain" id="PRO_0000131333" description="Large ribosomal subunit protein uL18">
    <location>
        <begin position="1"/>
        <end position="118"/>
    </location>
</feature>
<proteinExistence type="inferred from homology"/>
<comment type="function">
    <text evidence="1">This is one of the proteins that bind and probably mediate the attachment of the 5S RNA into the large ribosomal subunit, where it forms part of the central protuberance.</text>
</comment>
<comment type="subunit">
    <text evidence="1">Part of the 50S ribosomal subunit; part of the 5S rRNA/L5/L18/L25 subcomplex. Contacts the 5S and 23S rRNAs.</text>
</comment>
<comment type="similarity">
    <text evidence="1">Belongs to the universal ribosomal protein uL18 family.</text>
</comment>
<reference key="1">
    <citation type="journal article" date="2004" name="J. Bacteriol.">
        <title>Complete genome sequence of Rickettsia typhi and comparison with sequences of other Rickettsiae.</title>
        <authorList>
            <person name="McLeod M.P."/>
            <person name="Qin X."/>
            <person name="Karpathy S.E."/>
            <person name="Gioia J."/>
            <person name="Highlander S.K."/>
            <person name="Fox G.E."/>
            <person name="McNeill T.Z."/>
            <person name="Jiang H."/>
            <person name="Muzny D."/>
            <person name="Jacob L.S."/>
            <person name="Hawes A.C."/>
            <person name="Sodergren E."/>
            <person name="Gill R."/>
            <person name="Hume J."/>
            <person name="Morgan M."/>
            <person name="Fan G."/>
            <person name="Amin A.G."/>
            <person name="Gibbs R.A."/>
            <person name="Hong C."/>
            <person name="Yu X.-J."/>
            <person name="Walker D.H."/>
            <person name="Weinstock G.M."/>
        </authorList>
    </citation>
    <scope>NUCLEOTIDE SEQUENCE [LARGE SCALE GENOMIC DNA]</scope>
    <source>
        <strain>ATCC VR-144 / Wilmington</strain>
    </source>
</reference>
<name>RL18_RICTY</name>
<organism>
    <name type="scientific">Rickettsia typhi (strain ATCC VR-144 / Wilmington)</name>
    <dbReference type="NCBI Taxonomy" id="257363"/>
    <lineage>
        <taxon>Bacteria</taxon>
        <taxon>Pseudomonadati</taxon>
        <taxon>Pseudomonadota</taxon>
        <taxon>Alphaproteobacteria</taxon>
        <taxon>Rickettsiales</taxon>
        <taxon>Rickettsiaceae</taxon>
        <taxon>Rickettsieae</taxon>
        <taxon>Rickettsia</taxon>
        <taxon>typhus group</taxon>
    </lineage>
</organism>
<protein>
    <recommendedName>
        <fullName evidence="1">Large ribosomal subunit protein uL18</fullName>
    </recommendedName>
    <alternativeName>
        <fullName evidence="2">50S ribosomal protein L18</fullName>
    </alternativeName>
</protein>
<evidence type="ECO:0000255" key="1">
    <source>
        <dbReference type="HAMAP-Rule" id="MF_01337"/>
    </source>
</evidence>
<evidence type="ECO:0000305" key="2"/>